<comment type="function">
    <text evidence="1">Cell wall formation. Catalyzes the addition of glutamate to the nucleotide precursor UDP-N-acetylmuramoyl-L-alanine (UMA).</text>
</comment>
<comment type="catalytic activity">
    <reaction evidence="1">
        <text>UDP-N-acetyl-alpha-D-muramoyl-L-alanine + D-glutamate + ATP = UDP-N-acetyl-alpha-D-muramoyl-L-alanyl-D-glutamate + ADP + phosphate + H(+)</text>
        <dbReference type="Rhea" id="RHEA:16429"/>
        <dbReference type="ChEBI" id="CHEBI:15378"/>
        <dbReference type="ChEBI" id="CHEBI:29986"/>
        <dbReference type="ChEBI" id="CHEBI:30616"/>
        <dbReference type="ChEBI" id="CHEBI:43474"/>
        <dbReference type="ChEBI" id="CHEBI:83898"/>
        <dbReference type="ChEBI" id="CHEBI:83900"/>
        <dbReference type="ChEBI" id="CHEBI:456216"/>
        <dbReference type="EC" id="6.3.2.9"/>
    </reaction>
</comment>
<comment type="pathway">
    <text evidence="1">Cell wall biogenesis; peptidoglycan biosynthesis.</text>
</comment>
<comment type="subcellular location">
    <subcellularLocation>
        <location evidence="1">Cytoplasm</location>
    </subcellularLocation>
</comment>
<comment type="similarity">
    <text evidence="1">Belongs to the MurCDEF family.</text>
</comment>
<keyword id="KW-0067">ATP-binding</keyword>
<keyword id="KW-0131">Cell cycle</keyword>
<keyword id="KW-0132">Cell division</keyword>
<keyword id="KW-0133">Cell shape</keyword>
<keyword id="KW-0961">Cell wall biogenesis/degradation</keyword>
<keyword id="KW-0963">Cytoplasm</keyword>
<keyword id="KW-0436">Ligase</keyword>
<keyword id="KW-0547">Nucleotide-binding</keyword>
<keyword id="KW-0573">Peptidoglycan synthesis</keyword>
<keyword id="KW-1185">Reference proteome</keyword>
<sequence length="467" mass="48547">MTNWQGKNVTVAGLGVSGIPAARVLHGLGAVVTVVNDGDDERSRAQAADLEALGITVRLGDGATLPEGTELIVTTPGWQPDKPLFAAAAEAGVPVWGDVELAWRLRGPGSAPWLAVTGTNGKTTTVQMLASILTAAGLRTAAVGNIGVSLLDAVLGEETYDVLAVELSSYQLHWAPSLRAHSATVLNIAPDHLDWHGSMEAYTADKGRIYEGNRVACVYNVADKATEDLVRAADVEEGCRAVGFTLGTPGPSQLGVVEGILVDRAFVEDRQKNAQELAEVADVHPPAPHNIANALAAAALARAFGVPASAVRDGLRAFRPDAHRIAHVADVDGVTYIDDSKATNTHAAEASLAAYGSIVWIAGGLAKGASFDELVAKSAQRLRGVVLIGADRALIREALARHAPEVPVVDLDRTDTGAMPAAVQEARRLAVAGDTVLLAPACASMDMFANYNKRGDAFAEAVRGLGA</sequence>
<evidence type="ECO:0000255" key="1">
    <source>
        <dbReference type="HAMAP-Rule" id="MF_00639"/>
    </source>
</evidence>
<reference key="1">
    <citation type="journal article" date="2001" name="Proc. Natl. Acad. Sci. U.S.A.">
        <title>Genome sequence of an industrial microorganism Streptomyces avermitilis: deducing the ability of producing secondary metabolites.</title>
        <authorList>
            <person name="Omura S."/>
            <person name="Ikeda H."/>
            <person name="Ishikawa J."/>
            <person name="Hanamoto A."/>
            <person name="Takahashi C."/>
            <person name="Shinose M."/>
            <person name="Takahashi Y."/>
            <person name="Horikawa H."/>
            <person name="Nakazawa H."/>
            <person name="Osonoe T."/>
            <person name="Kikuchi H."/>
            <person name="Shiba T."/>
            <person name="Sakaki Y."/>
            <person name="Hattori M."/>
        </authorList>
    </citation>
    <scope>NUCLEOTIDE SEQUENCE [LARGE SCALE GENOMIC DNA]</scope>
    <source>
        <strain>ATCC 31267 / DSM 46492 / JCM 5070 / NBRC 14893 / NCIMB 12804 / NRRL 8165 / MA-4680</strain>
    </source>
</reference>
<reference key="2">
    <citation type="journal article" date="2003" name="Nat. Biotechnol.">
        <title>Complete genome sequence and comparative analysis of the industrial microorganism Streptomyces avermitilis.</title>
        <authorList>
            <person name="Ikeda H."/>
            <person name="Ishikawa J."/>
            <person name="Hanamoto A."/>
            <person name="Shinose M."/>
            <person name="Kikuchi H."/>
            <person name="Shiba T."/>
            <person name="Sakaki Y."/>
            <person name="Hattori M."/>
            <person name="Omura S."/>
        </authorList>
    </citation>
    <scope>NUCLEOTIDE SEQUENCE [LARGE SCALE GENOMIC DNA]</scope>
    <source>
        <strain>ATCC 31267 / DSM 46492 / JCM 5070 / NBRC 14893 / NCIMB 12804 / NRRL 8165 / MA-4680</strain>
    </source>
</reference>
<accession>Q82AD8</accession>
<feature type="chain" id="PRO_0000109105" description="UDP-N-acetylmuramoylalanine--D-glutamate ligase">
    <location>
        <begin position="1"/>
        <end position="467"/>
    </location>
</feature>
<feature type="binding site" evidence="1">
    <location>
        <begin position="118"/>
        <end position="124"/>
    </location>
    <ligand>
        <name>ATP</name>
        <dbReference type="ChEBI" id="CHEBI:30616"/>
    </ligand>
</feature>
<dbReference type="EC" id="6.3.2.9" evidence="1"/>
<dbReference type="EMBL" id="BA000030">
    <property type="protein sequence ID" value="BAC73831.1"/>
    <property type="molecule type" value="Genomic_DNA"/>
</dbReference>
<dbReference type="SMR" id="Q82AD8"/>
<dbReference type="KEGG" id="sma:SAVERM_6120"/>
<dbReference type="eggNOG" id="COG0771">
    <property type="taxonomic scope" value="Bacteria"/>
</dbReference>
<dbReference type="HOGENOM" id="CLU_032540_0_0_11"/>
<dbReference type="OrthoDB" id="9809796at2"/>
<dbReference type="UniPathway" id="UPA00219"/>
<dbReference type="Proteomes" id="UP000000428">
    <property type="component" value="Chromosome"/>
</dbReference>
<dbReference type="GO" id="GO:0005737">
    <property type="term" value="C:cytoplasm"/>
    <property type="evidence" value="ECO:0007669"/>
    <property type="project" value="UniProtKB-SubCell"/>
</dbReference>
<dbReference type="GO" id="GO:0005524">
    <property type="term" value="F:ATP binding"/>
    <property type="evidence" value="ECO:0007669"/>
    <property type="project" value="UniProtKB-UniRule"/>
</dbReference>
<dbReference type="GO" id="GO:0004326">
    <property type="term" value="F:tetrahydrofolylpolyglutamate synthase activity"/>
    <property type="evidence" value="ECO:0007669"/>
    <property type="project" value="InterPro"/>
</dbReference>
<dbReference type="GO" id="GO:0008764">
    <property type="term" value="F:UDP-N-acetylmuramoylalanine-D-glutamate ligase activity"/>
    <property type="evidence" value="ECO:0007669"/>
    <property type="project" value="UniProtKB-UniRule"/>
</dbReference>
<dbReference type="GO" id="GO:0051301">
    <property type="term" value="P:cell division"/>
    <property type="evidence" value="ECO:0007669"/>
    <property type="project" value="UniProtKB-KW"/>
</dbReference>
<dbReference type="GO" id="GO:0071555">
    <property type="term" value="P:cell wall organization"/>
    <property type="evidence" value="ECO:0007669"/>
    <property type="project" value="UniProtKB-KW"/>
</dbReference>
<dbReference type="GO" id="GO:0009252">
    <property type="term" value="P:peptidoglycan biosynthetic process"/>
    <property type="evidence" value="ECO:0007669"/>
    <property type="project" value="UniProtKB-UniRule"/>
</dbReference>
<dbReference type="GO" id="GO:0008360">
    <property type="term" value="P:regulation of cell shape"/>
    <property type="evidence" value="ECO:0007669"/>
    <property type="project" value="UniProtKB-KW"/>
</dbReference>
<dbReference type="Gene3D" id="3.90.190.20">
    <property type="entry name" value="Mur ligase, C-terminal domain"/>
    <property type="match status" value="1"/>
</dbReference>
<dbReference type="Gene3D" id="3.40.1190.10">
    <property type="entry name" value="Mur-like, catalytic domain"/>
    <property type="match status" value="1"/>
</dbReference>
<dbReference type="Gene3D" id="3.40.50.720">
    <property type="entry name" value="NAD(P)-binding Rossmann-like Domain"/>
    <property type="match status" value="1"/>
</dbReference>
<dbReference type="HAMAP" id="MF_00639">
    <property type="entry name" value="MurD"/>
    <property type="match status" value="1"/>
</dbReference>
<dbReference type="InterPro" id="IPR018109">
    <property type="entry name" value="Folylpolyglutamate_synth_CS"/>
</dbReference>
<dbReference type="InterPro" id="IPR036565">
    <property type="entry name" value="Mur-like_cat_sf"/>
</dbReference>
<dbReference type="InterPro" id="IPR004101">
    <property type="entry name" value="Mur_ligase_C"/>
</dbReference>
<dbReference type="InterPro" id="IPR036615">
    <property type="entry name" value="Mur_ligase_C_dom_sf"/>
</dbReference>
<dbReference type="InterPro" id="IPR013221">
    <property type="entry name" value="Mur_ligase_cen"/>
</dbReference>
<dbReference type="InterPro" id="IPR005762">
    <property type="entry name" value="MurD"/>
</dbReference>
<dbReference type="NCBIfam" id="TIGR01087">
    <property type="entry name" value="murD"/>
    <property type="match status" value="1"/>
</dbReference>
<dbReference type="PANTHER" id="PTHR43692">
    <property type="entry name" value="UDP-N-ACETYLMURAMOYLALANINE--D-GLUTAMATE LIGASE"/>
    <property type="match status" value="1"/>
</dbReference>
<dbReference type="PANTHER" id="PTHR43692:SF1">
    <property type="entry name" value="UDP-N-ACETYLMURAMOYLALANINE--D-GLUTAMATE LIGASE"/>
    <property type="match status" value="1"/>
</dbReference>
<dbReference type="Pfam" id="PF02875">
    <property type="entry name" value="Mur_ligase_C"/>
    <property type="match status" value="1"/>
</dbReference>
<dbReference type="Pfam" id="PF08245">
    <property type="entry name" value="Mur_ligase_M"/>
    <property type="match status" value="1"/>
</dbReference>
<dbReference type="SUPFAM" id="SSF51984">
    <property type="entry name" value="MurCD N-terminal domain"/>
    <property type="match status" value="1"/>
</dbReference>
<dbReference type="SUPFAM" id="SSF53623">
    <property type="entry name" value="MurD-like peptide ligases, catalytic domain"/>
    <property type="match status" value="1"/>
</dbReference>
<dbReference type="SUPFAM" id="SSF53244">
    <property type="entry name" value="MurD-like peptide ligases, peptide-binding domain"/>
    <property type="match status" value="1"/>
</dbReference>
<protein>
    <recommendedName>
        <fullName evidence="1">UDP-N-acetylmuramoylalanine--D-glutamate ligase</fullName>
        <ecNumber evidence="1">6.3.2.9</ecNumber>
    </recommendedName>
    <alternativeName>
        <fullName evidence="1">D-glutamic acid-adding enzyme</fullName>
    </alternativeName>
    <alternativeName>
        <fullName evidence="1">UDP-N-acetylmuramoyl-L-alanyl-D-glutamate synthetase</fullName>
    </alternativeName>
</protein>
<organism>
    <name type="scientific">Streptomyces avermitilis (strain ATCC 31267 / DSM 46492 / JCM 5070 / NBRC 14893 / NCIMB 12804 / NRRL 8165 / MA-4680)</name>
    <dbReference type="NCBI Taxonomy" id="227882"/>
    <lineage>
        <taxon>Bacteria</taxon>
        <taxon>Bacillati</taxon>
        <taxon>Actinomycetota</taxon>
        <taxon>Actinomycetes</taxon>
        <taxon>Kitasatosporales</taxon>
        <taxon>Streptomycetaceae</taxon>
        <taxon>Streptomyces</taxon>
    </lineage>
</organism>
<name>MURD_STRAW</name>
<proteinExistence type="inferred from homology"/>
<gene>
    <name evidence="1" type="primary">murD</name>
    <name type="ordered locus">SAV_6120</name>
</gene>